<accession>B5XJV1</accession>
<keyword id="KW-0963">Cytoplasm</keyword>
<keyword id="KW-0489">Methyltransferase</keyword>
<keyword id="KW-0698">rRNA processing</keyword>
<keyword id="KW-0949">S-adenosyl-L-methionine</keyword>
<keyword id="KW-0808">Transferase</keyword>
<organism>
    <name type="scientific">Streptococcus pyogenes serotype M49 (strain NZ131)</name>
    <dbReference type="NCBI Taxonomy" id="471876"/>
    <lineage>
        <taxon>Bacteria</taxon>
        <taxon>Bacillati</taxon>
        <taxon>Bacillota</taxon>
        <taxon>Bacilli</taxon>
        <taxon>Lactobacillales</taxon>
        <taxon>Streptococcaceae</taxon>
        <taxon>Streptococcus</taxon>
    </lineage>
</organism>
<protein>
    <recommendedName>
        <fullName evidence="1">Ribosomal RNA small subunit methyltransferase G</fullName>
        <ecNumber evidence="1">2.1.1.-</ecNumber>
    </recommendedName>
    <alternativeName>
        <fullName evidence="1">16S rRNA 7-methylguanosine methyltransferase</fullName>
        <shortName evidence="1">16S rRNA m7G methyltransferase</shortName>
    </alternativeName>
</protein>
<feature type="chain" id="PRO_1000092658" description="Ribosomal RNA small subunit methyltransferase G">
    <location>
        <begin position="1"/>
        <end position="237"/>
    </location>
</feature>
<feature type="binding site" evidence="1">
    <location>
        <position position="78"/>
    </location>
    <ligand>
        <name>S-adenosyl-L-methionine</name>
        <dbReference type="ChEBI" id="CHEBI:59789"/>
    </ligand>
</feature>
<feature type="binding site" evidence="1">
    <location>
        <position position="83"/>
    </location>
    <ligand>
        <name>S-adenosyl-L-methionine</name>
        <dbReference type="ChEBI" id="CHEBI:59789"/>
    </ligand>
</feature>
<feature type="binding site" evidence="1">
    <location>
        <begin position="129"/>
        <end position="130"/>
    </location>
    <ligand>
        <name>S-adenosyl-L-methionine</name>
        <dbReference type="ChEBI" id="CHEBI:59789"/>
    </ligand>
</feature>
<feature type="binding site" evidence="1">
    <location>
        <position position="148"/>
    </location>
    <ligand>
        <name>S-adenosyl-L-methionine</name>
        <dbReference type="ChEBI" id="CHEBI:59789"/>
    </ligand>
</feature>
<comment type="function">
    <text evidence="1">Specifically methylates the N7 position of a guanine in 16S rRNA.</text>
</comment>
<comment type="subcellular location">
    <subcellularLocation>
        <location evidence="1">Cytoplasm</location>
    </subcellularLocation>
</comment>
<comment type="similarity">
    <text evidence="1">Belongs to the methyltransferase superfamily. RNA methyltransferase RsmG family.</text>
</comment>
<proteinExistence type="inferred from homology"/>
<sequence>MTPQDFYRTLEEDGFSLSSKQKEQFDTYFKLLVEWNTKINLTAITEENEVYLKHFYDSIAPILQGFLANEPIKLLDIGAGAGFPSLPMKILFPNLEVTIIDSLNKRISFLTLLAQELGLENVHFFHGRAEDFGQDKAFRGQFDVVTARAVARMQVLSELTIPFLKIGGKLIALKAQAADQELEEAKNALCLLFGKVIKNHSYQLPNGDSRFITIVEKKKETPYKYPRKAGLPNKKPL</sequence>
<reference key="1">
    <citation type="journal article" date="2008" name="J. Bacteriol.">
        <title>Genome sequence of a nephritogenic and highly transformable M49 strain of Streptococcus pyogenes.</title>
        <authorList>
            <person name="McShan W.M."/>
            <person name="Ferretti J.J."/>
            <person name="Karasawa T."/>
            <person name="Suvorov A.N."/>
            <person name="Lin S."/>
            <person name="Qin B."/>
            <person name="Jia H."/>
            <person name="Kenton S."/>
            <person name="Najar F."/>
            <person name="Wu H."/>
            <person name="Scott J."/>
            <person name="Roe B.A."/>
            <person name="Savic D.J."/>
        </authorList>
    </citation>
    <scope>NUCLEOTIDE SEQUENCE [LARGE SCALE GENOMIC DNA]</scope>
    <source>
        <strain>NZ131</strain>
    </source>
</reference>
<dbReference type="EC" id="2.1.1.-" evidence="1"/>
<dbReference type="EMBL" id="CP000829">
    <property type="protein sequence ID" value="ACI60613.1"/>
    <property type="molecule type" value="Genomic_DNA"/>
</dbReference>
<dbReference type="SMR" id="B5XJV1"/>
<dbReference type="KEGG" id="soz:Spy49_0275"/>
<dbReference type="HOGENOM" id="CLU_065341_0_2_9"/>
<dbReference type="Proteomes" id="UP000001039">
    <property type="component" value="Chromosome"/>
</dbReference>
<dbReference type="GO" id="GO:0005829">
    <property type="term" value="C:cytosol"/>
    <property type="evidence" value="ECO:0007669"/>
    <property type="project" value="TreeGrafter"/>
</dbReference>
<dbReference type="GO" id="GO:0070043">
    <property type="term" value="F:rRNA (guanine-N7-)-methyltransferase activity"/>
    <property type="evidence" value="ECO:0007669"/>
    <property type="project" value="UniProtKB-UniRule"/>
</dbReference>
<dbReference type="CDD" id="cd02440">
    <property type="entry name" value="AdoMet_MTases"/>
    <property type="match status" value="1"/>
</dbReference>
<dbReference type="FunFam" id="3.40.50.150:FF:000041">
    <property type="entry name" value="Ribosomal RNA small subunit methyltransferase G"/>
    <property type="match status" value="1"/>
</dbReference>
<dbReference type="Gene3D" id="3.40.50.150">
    <property type="entry name" value="Vaccinia Virus protein VP39"/>
    <property type="match status" value="1"/>
</dbReference>
<dbReference type="HAMAP" id="MF_00074">
    <property type="entry name" value="16SrRNA_methyltr_G"/>
    <property type="match status" value="1"/>
</dbReference>
<dbReference type="InterPro" id="IPR003682">
    <property type="entry name" value="rRNA_ssu_MeTfrase_G"/>
</dbReference>
<dbReference type="InterPro" id="IPR029063">
    <property type="entry name" value="SAM-dependent_MTases_sf"/>
</dbReference>
<dbReference type="NCBIfam" id="TIGR00138">
    <property type="entry name" value="rsmG_gidB"/>
    <property type="match status" value="1"/>
</dbReference>
<dbReference type="PANTHER" id="PTHR31760">
    <property type="entry name" value="S-ADENOSYL-L-METHIONINE-DEPENDENT METHYLTRANSFERASES SUPERFAMILY PROTEIN"/>
    <property type="match status" value="1"/>
</dbReference>
<dbReference type="PANTHER" id="PTHR31760:SF0">
    <property type="entry name" value="S-ADENOSYL-L-METHIONINE-DEPENDENT METHYLTRANSFERASES SUPERFAMILY PROTEIN"/>
    <property type="match status" value="1"/>
</dbReference>
<dbReference type="Pfam" id="PF02527">
    <property type="entry name" value="GidB"/>
    <property type="match status" value="1"/>
</dbReference>
<dbReference type="PIRSF" id="PIRSF003078">
    <property type="entry name" value="GidB"/>
    <property type="match status" value="1"/>
</dbReference>
<dbReference type="SUPFAM" id="SSF53335">
    <property type="entry name" value="S-adenosyl-L-methionine-dependent methyltransferases"/>
    <property type="match status" value="1"/>
</dbReference>
<evidence type="ECO:0000255" key="1">
    <source>
        <dbReference type="HAMAP-Rule" id="MF_00074"/>
    </source>
</evidence>
<gene>
    <name evidence="1" type="primary">rsmG</name>
    <name type="ordered locus">Spy49_0275</name>
</gene>
<name>RSMG_STRPZ</name>